<protein>
    <recommendedName>
        <fullName evidence="1">Ribosomal RNA small subunit methyltransferase G</fullName>
        <ecNumber evidence="1">2.1.1.170</ecNumber>
    </recommendedName>
    <alternativeName>
        <fullName evidence="1">16S rRNA 7-methylguanosine methyltransferase</fullName>
        <shortName evidence="1">16S rRNA m7G methyltransferase</shortName>
    </alternativeName>
</protein>
<feature type="chain" id="PRO_1000092608" description="Ribosomal RNA small subunit methyltransferase G">
    <location>
        <begin position="1"/>
        <end position="210"/>
    </location>
</feature>
<feature type="binding site" evidence="1">
    <location>
        <position position="76"/>
    </location>
    <ligand>
        <name>S-adenosyl-L-methionine</name>
        <dbReference type="ChEBI" id="CHEBI:59789"/>
    </ligand>
</feature>
<feature type="binding site" evidence="1">
    <location>
        <position position="81"/>
    </location>
    <ligand>
        <name>S-adenosyl-L-methionine</name>
        <dbReference type="ChEBI" id="CHEBI:59789"/>
    </ligand>
</feature>
<feature type="binding site" evidence="1">
    <location>
        <begin position="127"/>
        <end position="128"/>
    </location>
    <ligand>
        <name>S-adenosyl-L-methionine</name>
        <dbReference type="ChEBI" id="CHEBI:59789"/>
    </ligand>
</feature>
<feature type="binding site" evidence="1">
    <location>
        <position position="145"/>
    </location>
    <ligand>
        <name>S-adenosyl-L-methionine</name>
        <dbReference type="ChEBI" id="CHEBI:59789"/>
    </ligand>
</feature>
<comment type="function">
    <text evidence="1">Specifically methylates the N7 position of guanine in position 527 of 16S rRNA.</text>
</comment>
<comment type="catalytic activity">
    <reaction evidence="1">
        <text>guanosine(527) in 16S rRNA + S-adenosyl-L-methionine = N(7)-methylguanosine(527) in 16S rRNA + S-adenosyl-L-homocysteine</text>
        <dbReference type="Rhea" id="RHEA:42732"/>
        <dbReference type="Rhea" id="RHEA-COMP:10209"/>
        <dbReference type="Rhea" id="RHEA-COMP:10210"/>
        <dbReference type="ChEBI" id="CHEBI:57856"/>
        <dbReference type="ChEBI" id="CHEBI:59789"/>
        <dbReference type="ChEBI" id="CHEBI:74269"/>
        <dbReference type="ChEBI" id="CHEBI:74480"/>
        <dbReference type="EC" id="2.1.1.170"/>
    </reaction>
</comment>
<comment type="subcellular location">
    <subcellularLocation>
        <location evidence="1">Cytoplasm</location>
    </subcellularLocation>
</comment>
<comment type="similarity">
    <text evidence="1">Belongs to the methyltransferase superfamily. RNA methyltransferase RsmG family.</text>
</comment>
<sequence length="210" mass="23648">MHPFFQELQQGSQKLGLSLSDEALTLLLKYQDALVLWNKAYNLTAIRDPKEMLVKHLLDSLSILKDLPAGRLLDVGTGGGMPGMIIALCQPERSCVLLDSNGKKIRFLKQFIADLKLKNVIAVQTRVENQDTIDELGQFDVITSRAFASLTDFVGAARPYLHEQSIIAAMKGLIPVEEMEELKQEFSCKVIELHVPRLDEQRHLLLLQRI</sequence>
<reference key="1">
    <citation type="journal article" date="2008" name="PLoS ONE">
        <title>Comparative analysis of Acinetobacters: three genomes for three lifestyles.</title>
        <authorList>
            <person name="Vallenet D."/>
            <person name="Nordmann P."/>
            <person name="Barbe V."/>
            <person name="Poirel L."/>
            <person name="Mangenot S."/>
            <person name="Bataille E."/>
            <person name="Dossat C."/>
            <person name="Gas S."/>
            <person name="Kreimeyer A."/>
            <person name="Lenoble P."/>
            <person name="Oztas S."/>
            <person name="Poulain J."/>
            <person name="Segurens B."/>
            <person name="Robert C."/>
            <person name="Abergel C."/>
            <person name="Claverie J.-M."/>
            <person name="Raoult D."/>
            <person name="Medigue C."/>
            <person name="Weissenbach J."/>
            <person name="Cruveiller S."/>
        </authorList>
    </citation>
    <scope>NUCLEOTIDE SEQUENCE [LARGE SCALE GENOMIC DNA]</scope>
    <source>
        <strain>SDF</strain>
    </source>
</reference>
<organism>
    <name type="scientific">Acinetobacter baumannii (strain SDF)</name>
    <dbReference type="NCBI Taxonomy" id="509170"/>
    <lineage>
        <taxon>Bacteria</taxon>
        <taxon>Pseudomonadati</taxon>
        <taxon>Pseudomonadota</taxon>
        <taxon>Gammaproteobacteria</taxon>
        <taxon>Moraxellales</taxon>
        <taxon>Moraxellaceae</taxon>
        <taxon>Acinetobacter</taxon>
        <taxon>Acinetobacter calcoaceticus/baumannii complex</taxon>
    </lineage>
</organism>
<name>RSMG_ACIBS</name>
<proteinExistence type="inferred from homology"/>
<gene>
    <name evidence="1" type="primary">rsmG</name>
    <name type="ordered locus">ABSDF1717</name>
</gene>
<evidence type="ECO:0000255" key="1">
    <source>
        <dbReference type="HAMAP-Rule" id="MF_00074"/>
    </source>
</evidence>
<accession>B0VMY0</accession>
<dbReference type="EC" id="2.1.1.170" evidence="1"/>
<dbReference type="EMBL" id="CU468230">
    <property type="protein sequence ID" value="CAP01056.1"/>
    <property type="molecule type" value="Genomic_DNA"/>
</dbReference>
<dbReference type="SMR" id="B0VMY0"/>
<dbReference type="KEGG" id="abm:ABSDF1717"/>
<dbReference type="HOGENOM" id="CLU_065341_2_0_6"/>
<dbReference type="Proteomes" id="UP000001741">
    <property type="component" value="Chromosome"/>
</dbReference>
<dbReference type="GO" id="GO:0005829">
    <property type="term" value="C:cytosol"/>
    <property type="evidence" value="ECO:0007669"/>
    <property type="project" value="TreeGrafter"/>
</dbReference>
<dbReference type="GO" id="GO:0070043">
    <property type="term" value="F:rRNA (guanine-N7-)-methyltransferase activity"/>
    <property type="evidence" value="ECO:0007669"/>
    <property type="project" value="UniProtKB-UniRule"/>
</dbReference>
<dbReference type="Gene3D" id="3.40.50.150">
    <property type="entry name" value="Vaccinia Virus protein VP39"/>
    <property type="match status" value="1"/>
</dbReference>
<dbReference type="HAMAP" id="MF_00074">
    <property type="entry name" value="16SrRNA_methyltr_G"/>
    <property type="match status" value="1"/>
</dbReference>
<dbReference type="InterPro" id="IPR003682">
    <property type="entry name" value="rRNA_ssu_MeTfrase_G"/>
</dbReference>
<dbReference type="InterPro" id="IPR029063">
    <property type="entry name" value="SAM-dependent_MTases_sf"/>
</dbReference>
<dbReference type="NCBIfam" id="TIGR00138">
    <property type="entry name" value="rsmG_gidB"/>
    <property type="match status" value="1"/>
</dbReference>
<dbReference type="PANTHER" id="PTHR31760">
    <property type="entry name" value="S-ADENOSYL-L-METHIONINE-DEPENDENT METHYLTRANSFERASES SUPERFAMILY PROTEIN"/>
    <property type="match status" value="1"/>
</dbReference>
<dbReference type="PANTHER" id="PTHR31760:SF0">
    <property type="entry name" value="S-ADENOSYL-L-METHIONINE-DEPENDENT METHYLTRANSFERASES SUPERFAMILY PROTEIN"/>
    <property type="match status" value="1"/>
</dbReference>
<dbReference type="Pfam" id="PF02527">
    <property type="entry name" value="GidB"/>
    <property type="match status" value="1"/>
</dbReference>
<dbReference type="PIRSF" id="PIRSF003078">
    <property type="entry name" value="GidB"/>
    <property type="match status" value="1"/>
</dbReference>
<dbReference type="SUPFAM" id="SSF53335">
    <property type="entry name" value="S-adenosyl-L-methionine-dependent methyltransferases"/>
    <property type="match status" value="1"/>
</dbReference>
<keyword id="KW-0963">Cytoplasm</keyword>
<keyword id="KW-0489">Methyltransferase</keyword>
<keyword id="KW-0698">rRNA processing</keyword>
<keyword id="KW-0949">S-adenosyl-L-methionine</keyword>
<keyword id="KW-0808">Transferase</keyword>